<sequence>MVVASEIAKVASKTARDIAGCFTCQCGTQFDNVERIVQHFKECRYRDETCKDDDIVVYEPSSFVQDEKKDKPIIVEAASEATSEEACNSSKERQLPALSALSALSTLTTSANDDLWTARLIWQSTNDTKLDNSPSSNYTDLNHKLANYGLSILSIHALMCVECECLLNVIHTAQHMQIVHKLELNEDLLWFQELRTLKLKSPTNVLQTHSSQTHVYPYIRGLPVLLNGYECVPCTKNGTGFVHAIMDTFRHHVRRTHGKVIKLENCIRRTALQTVKNKYAQRCQFFKVDYVPLNGGEEEEEEEGEEKEDAQNIKERMVDFCFSKFMEKNQQRREQQDKGENKKRQDDVDQATDNNTNTILEDDEKDNDEEEEEEIVNAREKNLLNQQFNWTAIVKKLGENWDQLVRFEYTNGIVTLDTIVNQLIRYYYRGFRHLSGMTMGMRRMFTQGGSYSAQERGLCRLEQKDTVVRYAQSAALYLIFLLRRPSADSGIRRHLEAMCGATVERKEGGSNSSSNISNVANFDSAEDDNDNDNDNDRDSNNNNNNNNTNTDDDDKLAYLELHEALKLAFLQQYDFSKNVQDLEIMEFLACMSLHKDGTSKYAYEISACFAPLIYTCRLVAACELQRLIDEKQIDLLSIPSFQTAGSIAYAHVFCFITLGQRNLYDVLYETQKVVRDIIRTEGYANTLQGLSPSTVLFQPRSNSMYPCIGDAFNNMVRLDLSELTALYEGMFAKVQDLLKELCFDMNVEKLLPISLLRSIGDDINNSKLGYSFFKESIEIRSSHSVLLRTILKNSELCHRFFPSMSKKDLTKLFGGVSDQQRNECDNYSNHYNDNSNDNDNDVFLKLHWSKSAIKKYETKASIFNELLFCLVYISAGQPARAQEMVYWTLRNGKYKTRELYLMFGRLMIYSRYDKTRNMKFAEKPIPRFLSEPLSILALRYYVLVRPLEALMKYVTTADRSKVAVYLDFMFVIAGERLQRDLPYRIFPKATYQCIQKPLGFRNYRHIAHYFKEKNIEEEMTRESYFDLQAGHTRNTALYIYGRTMDNLHYLPSDYFANFFRASYKWQELLQIRDNPTHGLLVETKHPFIKRVDQLEEALNEKLARLVGEQMVEGDKEKDKTNEEKNKDEVKAEMTQPVVNQDSHDLQDQLATTPTAPTAFHYRPGLLQPSQTSVQHCCWALSQYYGLEAKFRSLKQFQSVYFSLLNRMNLITVLPTGGGKSLSFLIPALIEKKRQTPGKVMNMVTLVLVPMMSLRQDMMLRVNEKGLLVCSGNWTAFKDVRLTLETQLPDLFILTYESALTNSGLRFFESLATLGRLARVVIDEAHLLLTSGAWRTALSRASRLSGLYAPLHLLSATFPRQLEMVARQTFCTNFYVLRETSTARENIFYFLHPYDNTEFLLDLRTLMKRTKVFEGDGRAIIFCRTKKDVEYIHRRLHQSDLFAHTHVTIYTGDVSDEERQMNFDAFRNANGKTRIMIATKAFGLGINYMGVRLVVHYGLPASSMDYVQETGRAGRDGKYAIAALFYEKYDSTWSSYVEDSMKNFLNDNTMCVRSFLASEMDGECVCCASFANCVYCSRCSDSLLGEESTVSTMYGVKPTLPETPKPAIATHSRYNASFSSSPPPQPGNSSGMSAMNTNTTSTTPVSLSELSEITLFPSSVSPTWKKSFGNANTNLKYGLEDMSLSHRRGHKRTYDEHLNNVQQGVNHDMNRVHGSVGGMSGIVGIGIGIGDGDGDGDVDSRTIHFAEYKSRVQAVKKQWVDSTDISAQLERFFRVYKDECLSCTLGNPDTEIRAHTGKACPVRLSTCYKCGKADHNLRECKLRIRFQGLCLFCGLTKFEHADSDMAYTSDCRSWARKANLISLVYYAWNNVQYRRTIADKFLQGDVRDQAFYGFVCCSTTTNSAFVLVIHYLLSDVLQIM</sequence>
<feature type="chain" id="PRO_0000255585" description="ATP-dependent DNA helicase tlh2">
    <location>
        <begin position="1"/>
        <end position="1919"/>
    </location>
</feature>
<feature type="domain" description="Helicase ATP-binding" evidence="2">
    <location>
        <begin position="1200"/>
        <end position="1375"/>
    </location>
</feature>
<feature type="domain" description="Helicase C-terminal" evidence="3">
    <location>
        <begin position="1401"/>
        <end position="1559"/>
    </location>
</feature>
<feature type="zinc finger region" description="CCHC-type" evidence="1">
    <location>
        <begin position="1804"/>
        <end position="1821"/>
    </location>
</feature>
<feature type="region of interest" description="Disordered" evidence="4">
    <location>
        <begin position="329"/>
        <end position="372"/>
    </location>
</feature>
<feature type="region of interest" description="Disordered" evidence="4">
    <location>
        <begin position="504"/>
        <end position="552"/>
    </location>
</feature>
<feature type="region of interest" description="Disordered" evidence="4">
    <location>
        <begin position="1110"/>
        <end position="1135"/>
    </location>
</feature>
<feature type="region of interest" description="Disordered" evidence="4">
    <location>
        <begin position="1613"/>
        <end position="1643"/>
    </location>
</feature>
<feature type="short sequence motif" description="DEAH box">
    <location>
        <begin position="1322"/>
        <end position="1325"/>
    </location>
</feature>
<feature type="compositionally biased region" description="Basic and acidic residues" evidence="4">
    <location>
        <begin position="329"/>
        <end position="347"/>
    </location>
</feature>
<feature type="compositionally biased region" description="Acidic residues" evidence="4">
    <location>
        <begin position="360"/>
        <end position="372"/>
    </location>
</feature>
<feature type="compositionally biased region" description="Acidic residues" evidence="4">
    <location>
        <begin position="524"/>
        <end position="533"/>
    </location>
</feature>
<feature type="compositionally biased region" description="Low complexity" evidence="4">
    <location>
        <begin position="540"/>
        <end position="549"/>
    </location>
</feature>
<feature type="compositionally biased region" description="Basic and acidic residues" evidence="4">
    <location>
        <begin position="1112"/>
        <end position="1131"/>
    </location>
</feature>
<feature type="compositionally biased region" description="Low complexity" evidence="4">
    <location>
        <begin position="1626"/>
        <end position="1642"/>
    </location>
</feature>
<feature type="binding site" evidence="2">
    <location>
        <begin position="1213"/>
        <end position="1220"/>
    </location>
    <ligand>
        <name>ATP</name>
        <dbReference type="ChEBI" id="CHEBI:30616"/>
    </ligand>
</feature>
<feature type="binding site" evidence="2">
    <location>
        <begin position="1240"/>
        <end position="1247"/>
    </location>
    <ligand>
        <name>ATP</name>
        <dbReference type="ChEBI" id="CHEBI:30616"/>
    </ligand>
</feature>
<evidence type="ECO:0000255" key="1">
    <source>
        <dbReference type="PROSITE-ProRule" id="PRU00047"/>
    </source>
</evidence>
<evidence type="ECO:0000255" key="2">
    <source>
        <dbReference type="PROSITE-ProRule" id="PRU00541"/>
    </source>
</evidence>
<evidence type="ECO:0000255" key="3">
    <source>
        <dbReference type="PROSITE-ProRule" id="PRU00542"/>
    </source>
</evidence>
<evidence type="ECO:0000256" key="4">
    <source>
        <dbReference type="SAM" id="MobiDB-lite"/>
    </source>
</evidence>
<evidence type="ECO:0000269" key="5">
    <source>
    </source>
</evidence>
<evidence type="ECO:0000269" key="6">
    <source>
    </source>
</evidence>
<evidence type="ECO:0000303" key="7">
    <source>
    </source>
</evidence>
<evidence type="ECO:0000305" key="8"/>
<evidence type="ECO:0000305" key="9">
    <source>
    </source>
</evidence>
<keyword id="KW-0067">ATP-binding</keyword>
<keyword id="KW-0347">Helicase</keyword>
<keyword id="KW-0378">Hydrolase</keyword>
<keyword id="KW-0413">Isomerase</keyword>
<keyword id="KW-0479">Metal-binding</keyword>
<keyword id="KW-0547">Nucleotide-binding</keyword>
<keyword id="KW-1185">Reference proteome</keyword>
<keyword id="KW-0862">Zinc</keyword>
<keyword id="KW-0863">Zinc-finger</keyword>
<gene>
    <name evidence="7" type="primary">tlh2</name>
    <name type="ORF">SPBCPT2R1.08c</name>
</gene>
<name>TLH2_SCHPO</name>
<accession>Q1RKN3</accession>
<accession>A6X989</accession>
<accession>Q5EAK4</accession>
<accession>Q9HGP6</accession>
<reference key="1">
    <citation type="journal article" date="2005" name="J. Biol. Chem.">
        <title>Expression of a RecQ helicase homolog affects progression through crisis in fission yeast lacking telomerase.</title>
        <authorList>
            <person name="Mandell J.G."/>
            <person name="Goodrich K.J."/>
            <person name="Bahler J."/>
            <person name="Cech T.R."/>
        </authorList>
    </citation>
    <scope>NUCLEOTIDE SEQUENCE [MRNA]</scope>
    <scope>FUNCTION</scope>
    <source>
        <strain>H1</strain>
    </source>
</reference>
<reference key="2">
    <citation type="journal article" date="2002" name="Nature">
        <title>The genome sequence of Schizosaccharomyces pombe.</title>
        <authorList>
            <person name="Wood V."/>
            <person name="Gwilliam R."/>
            <person name="Rajandream M.A."/>
            <person name="Lyne M.H."/>
            <person name="Lyne R."/>
            <person name="Stewart A."/>
            <person name="Sgouros J.G."/>
            <person name="Peat N."/>
            <person name="Hayles J."/>
            <person name="Baker S.G."/>
            <person name="Basham D."/>
            <person name="Bowman S."/>
            <person name="Brooks K."/>
            <person name="Brown D."/>
            <person name="Brown S."/>
            <person name="Chillingworth T."/>
            <person name="Churcher C.M."/>
            <person name="Collins M."/>
            <person name="Connor R."/>
            <person name="Cronin A."/>
            <person name="Davis P."/>
            <person name="Feltwell T."/>
            <person name="Fraser A."/>
            <person name="Gentles S."/>
            <person name="Goble A."/>
            <person name="Hamlin N."/>
            <person name="Harris D.E."/>
            <person name="Hidalgo J."/>
            <person name="Hodgson G."/>
            <person name="Holroyd S."/>
            <person name="Hornsby T."/>
            <person name="Howarth S."/>
            <person name="Huckle E.J."/>
            <person name="Hunt S."/>
            <person name="Jagels K."/>
            <person name="James K.D."/>
            <person name="Jones L."/>
            <person name="Jones M."/>
            <person name="Leather S."/>
            <person name="McDonald S."/>
            <person name="McLean J."/>
            <person name="Mooney P."/>
            <person name="Moule S."/>
            <person name="Mungall K.L."/>
            <person name="Murphy L.D."/>
            <person name="Niblett D."/>
            <person name="Odell C."/>
            <person name="Oliver K."/>
            <person name="O'Neil S."/>
            <person name="Pearson D."/>
            <person name="Quail M.A."/>
            <person name="Rabbinowitsch E."/>
            <person name="Rutherford K.M."/>
            <person name="Rutter S."/>
            <person name="Saunders D."/>
            <person name="Seeger K."/>
            <person name="Sharp S."/>
            <person name="Skelton J."/>
            <person name="Simmonds M.N."/>
            <person name="Squares R."/>
            <person name="Squares S."/>
            <person name="Stevens K."/>
            <person name="Taylor K."/>
            <person name="Taylor R.G."/>
            <person name="Tivey A."/>
            <person name="Walsh S.V."/>
            <person name="Warren T."/>
            <person name="Whitehead S."/>
            <person name="Woodward J.R."/>
            <person name="Volckaert G."/>
            <person name="Aert R."/>
            <person name="Robben J."/>
            <person name="Grymonprez B."/>
            <person name="Weltjens I."/>
            <person name="Vanstreels E."/>
            <person name="Rieger M."/>
            <person name="Schaefer M."/>
            <person name="Mueller-Auer S."/>
            <person name="Gabel C."/>
            <person name="Fuchs M."/>
            <person name="Duesterhoeft A."/>
            <person name="Fritzc C."/>
            <person name="Holzer E."/>
            <person name="Moestl D."/>
            <person name="Hilbert H."/>
            <person name="Borzym K."/>
            <person name="Langer I."/>
            <person name="Beck A."/>
            <person name="Lehrach H."/>
            <person name="Reinhardt R."/>
            <person name="Pohl T.M."/>
            <person name="Eger P."/>
            <person name="Zimmermann W."/>
            <person name="Wedler H."/>
            <person name="Wambutt R."/>
            <person name="Purnelle B."/>
            <person name="Goffeau A."/>
            <person name="Cadieu E."/>
            <person name="Dreano S."/>
            <person name="Gloux S."/>
            <person name="Lelaure V."/>
            <person name="Mottier S."/>
            <person name="Galibert F."/>
            <person name="Aves S.J."/>
            <person name="Xiang Z."/>
            <person name="Hunt C."/>
            <person name="Moore K."/>
            <person name="Hurst S.M."/>
            <person name="Lucas M."/>
            <person name="Rochet M."/>
            <person name="Gaillardin C."/>
            <person name="Tallada V.A."/>
            <person name="Garzon A."/>
            <person name="Thode G."/>
            <person name="Daga R.R."/>
            <person name="Cruzado L."/>
            <person name="Jimenez J."/>
            <person name="Sanchez M."/>
            <person name="del Rey F."/>
            <person name="Benito J."/>
            <person name="Dominguez A."/>
            <person name="Revuelta J.L."/>
            <person name="Moreno S."/>
            <person name="Armstrong J."/>
            <person name="Forsburg S.L."/>
            <person name="Cerutti L."/>
            <person name="Lowe T."/>
            <person name="McCombie W.R."/>
            <person name="Paulsen I."/>
            <person name="Potashkin J."/>
            <person name="Shpakovski G.V."/>
            <person name="Ussery D."/>
            <person name="Barrell B.G."/>
            <person name="Nurse P."/>
        </authorList>
    </citation>
    <scope>NUCLEOTIDE SEQUENCE [LARGE SCALE GENOMIC DNA]</scope>
    <source>
        <strain>972 / ATCC 24843</strain>
    </source>
</reference>
<reference key="3">
    <citation type="journal article" date="2006" name="Nucleic Acids Res.">
        <title>Evolutionary-conserved telomere-linked helicase genes of fission yeast are repressed by silencing factors, RNAi components and the telomere-binding protein Taz1.</title>
        <authorList>
            <person name="Hansen K.R."/>
            <person name="Ibarra P.T."/>
            <person name="Thon G."/>
        </authorList>
    </citation>
    <scope>FUNCTION</scope>
    <scope>INDUCTION</scope>
</reference>
<organism>
    <name type="scientific">Schizosaccharomyces pombe (strain 972 / ATCC 24843)</name>
    <name type="common">Fission yeast</name>
    <dbReference type="NCBI Taxonomy" id="284812"/>
    <lineage>
        <taxon>Eukaryota</taxon>
        <taxon>Fungi</taxon>
        <taxon>Dikarya</taxon>
        <taxon>Ascomycota</taxon>
        <taxon>Taphrinomycotina</taxon>
        <taxon>Schizosaccharomycetes</taxon>
        <taxon>Schizosaccharomycetales</taxon>
        <taxon>Schizosaccharomycetaceae</taxon>
        <taxon>Schizosaccharomyces</taxon>
    </lineage>
</organism>
<proteinExistence type="evidence at transcript level"/>
<comment type="function">
    <text evidence="5 6 9">A probable ATP-dependent 3'-5' DNA helicase (Probable) (PubMed:15591066). Has a role in telomerase-independent telomere maintenance (PubMed:15591066). Represses ade6 at an ectopic site.</text>
</comment>
<comment type="catalytic activity">
    <reaction evidence="9">
        <text>Couples ATP hydrolysis with the unwinding of duplex DNA by translocating in the 3'-5' direction.</text>
        <dbReference type="EC" id="5.6.2.4"/>
    </reaction>
</comment>
<comment type="catalytic activity">
    <reaction>
        <text>ATP + H2O = ADP + phosphate + H(+)</text>
        <dbReference type="Rhea" id="RHEA:13065"/>
        <dbReference type="ChEBI" id="CHEBI:15377"/>
        <dbReference type="ChEBI" id="CHEBI:15378"/>
        <dbReference type="ChEBI" id="CHEBI:30616"/>
        <dbReference type="ChEBI" id="CHEBI:43474"/>
        <dbReference type="ChEBI" id="CHEBI:456216"/>
    </reaction>
</comment>
<comment type="induction">
    <text evidence="6">Repressed during various growth conditions, including nitrogen starvation, and by heterochromatin. Repression is strongly dependent on cul4, raf2 and raf1. Derepressed by histone deacetylase inhibitor TSA.</text>
</comment>
<comment type="similarity">
    <text evidence="8">Belongs to the helicase family. RecQ subfamily.</text>
</comment>
<comment type="sequence caution" evidence="8">
    <conflict type="erroneous initiation">
        <sequence resource="EMBL-CDS" id="DAA05660"/>
    </conflict>
    <text>Extended N-terminus.</text>
</comment>
<protein>
    <recommendedName>
        <fullName>ATP-dependent DNA helicase tlh2</fullName>
        <ecNumber evidence="9">5.6.2.4</ecNumber>
    </recommendedName>
    <alternativeName>
        <fullName evidence="8">DNA 3'-5' helicase thl2</fullName>
    </alternativeName>
    <alternativeName>
        <fullName>Sub-telomeric helicase RecQ homolog 2</fullName>
    </alternativeName>
    <alternativeName>
        <fullName evidence="7">Telomere-linked helicase 2</fullName>
    </alternativeName>
</protein>
<dbReference type="EC" id="5.6.2.4" evidence="9"/>
<dbReference type="EMBL" id="BK005597">
    <property type="protein sequence ID" value="DAA05660.1"/>
    <property type="status" value="ALT_INIT"/>
    <property type="molecule type" value="mRNA"/>
</dbReference>
<dbReference type="EMBL" id="BX784043">
    <property type="protein sequence ID" value="CAJ90629.1"/>
    <property type="molecule type" value="Genomic_DNA"/>
</dbReference>
<dbReference type="EMBL" id="CU329671">
    <property type="protein sequence ID" value="CAO77679.1"/>
    <property type="molecule type" value="Genomic_DNA"/>
</dbReference>
<dbReference type="RefSeq" id="XP_001713158.1">
    <property type="nucleotide sequence ID" value="XM_001713106.2"/>
</dbReference>
<dbReference type="SMR" id="Q1RKN3"/>
<dbReference type="BioGRID" id="857983">
    <property type="interactions" value="1"/>
</dbReference>
<dbReference type="FunCoup" id="Q1RKN3">
    <property type="interactions" value="156"/>
</dbReference>
<dbReference type="STRING" id="284812.Q1RKN3"/>
<dbReference type="iPTMnet" id="Q1RKN3"/>
<dbReference type="PaxDb" id="4896-SPBCPT2R1.08c.1"/>
<dbReference type="EnsemblFungi" id="SPBCPT2R1.08c.1">
    <property type="protein sequence ID" value="SPBCPT2R1.08c.1:pep"/>
    <property type="gene ID" value="SPBCPT2R1.08c"/>
</dbReference>
<dbReference type="PomBase" id="SPBCPT2R1.08c">
    <property type="gene designation" value="tlh2"/>
</dbReference>
<dbReference type="VEuPathDB" id="FungiDB:SPBCPT2R1.08c"/>
<dbReference type="eggNOG" id="KOG0351">
    <property type="taxonomic scope" value="Eukaryota"/>
</dbReference>
<dbReference type="HOGENOM" id="CLU_235408_0_0_1"/>
<dbReference type="InParanoid" id="Q1RKN3"/>
<dbReference type="OMA" id="CVYCSRC"/>
<dbReference type="PRO" id="PR:Q1RKN3"/>
<dbReference type="Proteomes" id="UP000002485">
    <property type="component" value="Chromosome II"/>
</dbReference>
<dbReference type="ExpressionAtlas" id="Q1RKN3">
    <property type="expression patterns" value="differential"/>
</dbReference>
<dbReference type="GO" id="GO:0005694">
    <property type="term" value="C:chromosome"/>
    <property type="evidence" value="ECO:0000318"/>
    <property type="project" value="GO_Central"/>
</dbReference>
<dbReference type="GO" id="GO:0140445">
    <property type="term" value="C:chromosome, telomeric repeat region"/>
    <property type="evidence" value="ECO:0000314"/>
    <property type="project" value="PomBase"/>
</dbReference>
<dbReference type="GO" id="GO:0005737">
    <property type="term" value="C:cytoplasm"/>
    <property type="evidence" value="ECO:0000318"/>
    <property type="project" value="GO_Central"/>
</dbReference>
<dbReference type="GO" id="GO:0005634">
    <property type="term" value="C:nucleus"/>
    <property type="evidence" value="ECO:0000318"/>
    <property type="project" value="GO_Central"/>
</dbReference>
<dbReference type="GO" id="GO:0043138">
    <property type="term" value="F:3'-5' DNA helicase activity"/>
    <property type="evidence" value="ECO:0000318"/>
    <property type="project" value="GO_Central"/>
</dbReference>
<dbReference type="GO" id="GO:0005524">
    <property type="term" value="F:ATP binding"/>
    <property type="evidence" value="ECO:0007669"/>
    <property type="project" value="UniProtKB-KW"/>
</dbReference>
<dbReference type="GO" id="GO:0016887">
    <property type="term" value="F:ATP hydrolysis activity"/>
    <property type="evidence" value="ECO:0007669"/>
    <property type="project" value="RHEA"/>
</dbReference>
<dbReference type="GO" id="GO:0003676">
    <property type="term" value="F:nucleic acid binding"/>
    <property type="evidence" value="ECO:0007669"/>
    <property type="project" value="InterPro"/>
</dbReference>
<dbReference type="GO" id="GO:0008270">
    <property type="term" value="F:zinc ion binding"/>
    <property type="evidence" value="ECO:0007669"/>
    <property type="project" value="UniProtKB-KW"/>
</dbReference>
<dbReference type="GO" id="GO:0006310">
    <property type="term" value="P:DNA recombination"/>
    <property type="evidence" value="ECO:0000318"/>
    <property type="project" value="GO_Central"/>
</dbReference>
<dbReference type="GO" id="GO:0006281">
    <property type="term" value="P:DNA repair"/>
    <property type="evidence" value="ECO:0000318"/>
    <property type="project" value="GO_Central"/>
</dbReference>
<dbReference type="GO" id="GO:0000722">
    <property type="term" value="P:telomere maintenance via recombination"/>
    <property type="evidence" value="ECO:0000270"/>
    <property type="project" value="PomBase"/>
</dbReference>
<dbReference type="Gene3D" id="3.40.50.300">
    <property type="entry name" value="P-loop containing nucleotide triphosphate hydrolases"/>
    <property type="match status" value="2"/>
</dbReference>
<dbReference type="InterPro" id="IPR011545">
    <property type="entry name" value="DEAD/DEAH_box_helicase_dom"/>
</dbReference>
<dbReference type="InterPro" id="IPR014001">
    <property type="entry name" value="Helicase_ATP-bd"/>
</dbReference>
<dbReference type="InterPro" id="IPR001650">
    <property type="entry name" value="Helicase_C-like"/>
</dbReference>
<dbReference type="InterPro" id="IPR027417">
    <property type="entry name" value="P-loop_NTPase"/>
</dbReference>
<dbReference type="InterPro" id="IPR001878">
    <property type="entry name" value="Znf_CCHC"/>
</dbReference>
<dbReference type="PANTHER" id="PTHR13710:SF149">
    <property type="entry name" value="ATP-DEPENDENT DNA HELICASE TLH2"/>
    <property type="match status" value="1"/>
</dbReference>
<dbReference type="PANTHER" id="PTHR13710">
    <property type="entry name" value="DNA HELICASE RECQ FAMILY MEMBER"/>
    <property type="match status" value="1"/>
</dbReference>
<dbReference type="Pfam" id="PF00270">
    <property type="entry name" value="DEAD"/>
    <property type="match status" value="1"/>
</dbReference>
<dbReference type="Pfam" id="PF00271">
    <property type="entry name" value="Helicase_C"/>
    <property type="match status" value="1"/>
</dbReference>
<dbReference type="SMART" id="SM00487">
    <property type="entry name" value="DEXDc"/>
    <property type="match status" value="1"/>
</dbReference>
<dbReference type="SMART" id="SM00490">
    <property type="entry name" value="HELICc"/>
    <property type="match status" value="1"/>
</dbReference>
<dbReference type="SUPFAM" id="SSF52540">
    <property type="entry name" value="P-loop containing nucleoside triphosphate hydrolases"/>
    <property type="match status" value="1"/>
</dbReference>
<dbReference type="PROSITE" id="PS51192">
    <property type="entry name" value="HELICASE_ATP_BIND_1"/>
    <property type="match status" value="1"/>
</dbReference>
<dbReference type="PROSITE" id="PS51194">
    <property type="entry name" value="HELICASE_CTER"/>
    <property type="match status" value="1"/>
</dbReference>
<dbReference type="PROSITE" id="PS50158">
    <property type="entry name" value="ZF_CCHC"/>
    <property type="match status" value="1"/>
</dbReference>